<reference key="1">
    <citation type="submission" date="2003-01" db="EMBL/GenBank/DDBJ databases">
        <authorList>
            <consortium name="NIH - Xenopus Gene Collection (XGC) project"/>
        </authorList>
    </citation>
    <scope>NUCLEOTIDE SEQUENCE [LARGE SCALE MRNA]</scope>
    <source>
        <tissue>Embryo</tissue>
    </source>
</reference>
<reference key="2">
    <citation type="journal article" date="2008" name="Development">
        <title>Two highly related regulatory subunits of PP2A exert opposite effects on TGF-beta/Activin/Nodal signalling.</title>
        <authorList>
            <person name="Batut J."/>
            <person name="Schmierer B."/>
            <person name="Cao J."/>
            <person name="Raftery L.A."/>
            <person name="Hill C.S."/>
            <person name="Howell M."/>
        </authorList>
    </citation>
    <scope>FUNCTION</scope>
</reference>
<reference key="3">
    <citation type="journal article" date="2009" name="EMBO J.">
        <title>Regulated activity of PP2A-B55 delta is crucial for controlling entry into and exit from mitosis in Xenopus egg extracts.</title>
        <authorList>
            <person name="Mochida S."/>
            <person name="Ikeo S."/>
            <person name="Gannon J."/>
            <person name="Hunt T."/>
        </authorList>
    </citation>
    <scope>FUNCTION</scope>
    <scope>IDENTIFICATION IN SOME PP2A COMPLEX</scope>
</reference>
<reference key="4">
    <citation type="journal article" date="2009" name="Mol. Biol. Cell">
        <title>The M phase kinase Greatwall (Gwl) promotes inactivation of PP2A/B55delta, a phosphatase directed against CDK phosphosites.</title>
        <authorList>
            <person name="Castilho P.V."/>
            <person name="Williams B.C."/>
            <person name="Mochida S."/>
            <person name="Zhao Y."/>
            <person name="Goldberg M.L."/>
        </authorList>
    </citation>
    <scope>FUNCTION</scope>
</reference>
<reference key="5">
    <citation type="journal article" date="2010" name="Science">
        <title>Greatwall phosphorylates an inhibitor of protein phosphatase 2A that is essential for mitosis.</title>
        <authorList>
            <person name="Mochida S."/>
            <person name="Maslen S.L."/>
            <person name="Skehel M."/>
            <person name="Hunt T."/>
        </authorList>
    </citation>
    <scope>FUNCTION</scope>
    <scope>INTERACTION WITH ARPP19 AND ENSA</scope>
</reference>
<comment type="function">
    <text evidence="2 3 4 5">Substrate-recognition subunit of protein phosphatase 2A (PP2A) that plays a key role in cell cycle by controlling mitosis entry and exit (PubMed:18697906, PubMed:19696736, PubMed:19793917, PubMed:21164013). The activity of PP2A complexes containing ppp2r2d (PR55-delta) fluctuate during the cell cycle: the activity is high in interphase and low in mitosis (PubMed:18697906, PubMed:19696736, PubMed:19793917, PubMed:21164013). During mitosis, activity of PP2A is inhibited via interaction with phosphorylated ensa and arpp19 inhibitors (PubMed:21164013). PP2A complexes containing ppp2r2d (PR55-delta) also regulate the activity of TGF-beta/Activin/Nodal signaling by restricting receptor activity (PubMed:18697906). Within the PP2A complexes, the B regulatory subunits modulate substrate selectivity and catalytic activity, and may also direct the localization of the catalytic enzyme to a particular subcellular compartment (PubMed:18697906, PubMed:19696736, PubMed:19793917, PubMed:21164013).</text>
</comment>
<comment type="subunit">
    <text evidence="3 5">PP2A consists of a common heterodimeric core enzyme, composed of a 36 kDa catalytic subunit (subunit C) and a 65 kDa constant regulatory subunit (PR65 or subunit A), that associates with a variety of regulatory subunits (PubMed:19696736). Proteins that associate with the core dimer include three families of regulatory subunits B (the R2/B/PR55/B55, R3/B''/PR72/PR130/PR59 and R5/B'/B56 families), the 48 kDa variable regulatory subunit, viral proteins, and cell signaling molecules (PubMed:19696736). Interacts with ensa (when phosphorylated at 'Ser-67') and arpp19 (when phosphorylated at 'Ser-67'), leading to inhibit PP2A activity (PubMed:21164013).</text>
</comment>
<comment type="subcellular location">
    <subcellularLocation>
        <location evidence="1">Cytoplasm</location>
    </subcellularLocation>
</comment>
<comment type="miscellaneous">
    <text evidence="7">ppp2r2d is an abundant subunit in egg extracts and represents 70% or more of B55 subunits.</text>
</comment>
<comment type="similarity">
    <text evidence="6">Belongs to the phosphatase 2A regulatory subunit B family.</text>
</comment>
<gene>
    <name type="primary">ppp2r2d</name>
</gene>
<name>2ABD_XENLA</name>
<organism>
    <name type="scientific">Xenopus laevis</name>
    <name type="common">African clawed frog</name>
    <dbReference type="NCBI Taxonomy" id="8355"/>
    <lineage>
        <taxon>Eukaryota</taxon>
        <taxon>Metazoa</taxon>
        <taxon>Chordata</taxon>
        <taxon>Craniata</taxon>
        <taxon>Vertebrata</taxon>
        <taxon>Euteleostomi</taxon>
        <taxon>Amphibia</taxon>
        <taxon>Batrachia</taxon>
        <taxon>Anura</taxon>
        <taxon>Pipoidea</taxon>
        <taxon>Pipidae</taxon>
        <taxon>Xenopodinae</taxon>
        <taxon>Xenopus</taxon>
        <taxon>Xenopus</taxon>
    </lineage>
</organism>
<feature type="chain" id="PRO_0000408325" description="Serine/threonine-protein phosphatase 2A 55 kDa regulatory subunit B delta isoform">
    <location>
        <begin position="1"/>
        <end position="447"/>
    </location>
</feature>
<feature type="repeat" description="WD 1">
    <location>
        <begin position="26"/>
        <end position="65"/>
    </location>
</feature>
<feature type="repeat" description="WD 2">
    <location>
        <begin position="91"/>
        <end position="132"/>
    </location>
</feature>
<feature type="repeat" description="WD 3">
    <location>
        <begin position="175"/>
        <end position="213"/>
    </location>
</feature>
<feature type="repeat" description="WD 4">
    <location>
        <begin position="224"/>
        <end position="264"/>
    </location>
</feature>
<feature type="repeat" description="WD 5">
    <location>
        <begin position="283"/>
        <end position="321"/>
    </location>
</feature>
<feature type="repeat" description="WD 6">
    <location>
        <begin position="338"/>
        <end position="379"/>
    </location>
</feature>
<feature type="repeat" description="WD 7">
    <location>
        <begin position="414"/>
        <end position="447"/>
    </location>
</feature>
<sequence>MAGVGGGNDFQWCFSQVKGAIDEDVAEADIISTVEFNCSGELLATGDKGGRVVIFQREQENKSRPHSRGEYNVYSTFQSHEPEFDYLKSLEIEEKINKIRWLPQQNAANFLLSTNDKTIKLWKISERDKRVEGYNLKDDDGRLRDPFRITSLRVPILKPMDLMVEASPRRIFANAHTYHINSISVNSDHQTYLSADDLRVNLWHLEITDRSFNIVDIKPANMEELTEVITAAEFHPHHCHMFVYSSSKGTIRLCDMRDAALCDRHSKFFEEPEDPSSRSFFSEIISSISDVKFSHSGRYMMTRDYLSVKVWDLNMESRPVETYQVHEYLRSKLCSLYENDCIFDKFECCWNGSDSSIMTGSYNNFFRMFDRNTRRDITLEASRESSKPRATLKPRKVCTGGKRKKDEINVDSLDFNKKILHTAWHPTDNIIAVAATNNLYIFQDKVN</sequence>
<proteinExistence type="evidence at protein level"/>
<accession>Q7ZX64</accession>
<dbReference type="EMBL" id="BC045219">
    <property type="protein sequence ID" value="AAH45219.1"/>
    <property type="molecule type" value="mRNA"/>
</dbReference>
<dbReference type="RefSeq" id="NP_001079618.1">
    <property type="nucleotide sequence ID" value="NM_001086149.1"/>
</dbReference>
<dbReference type="SMR" id="Q7ZX64"/>
<dbReference type="BioGRID" id="97548">
    <property type="interactions" value="1"/>
</dbReference>
<dbReference type="DNASU" id="379305"/>
<dbReference type="GeneID" id="379305"/>
<dbReference type="KEGG" id="xla:379305"/>
<dbReference type="AGR" id="Xenbase:XB-GENE-940318"/>
<dbReference type="CTD" id="379305"/>
<dbReference type="Xenbase" id="XB-GENE-940318">
    <property type="gene designation" value="ppp2r2d.S"/>
</dbReference>
<dbReference type="OMA" id="XADIIST"/>
<dbReference type="OrthoDB" id="6274823at2759"/>
<dbReference type="Proteomes" id="UP000186698">
    <property type="component" value="Chromosome 7S"/>
</dbReference>
<dbReference type="Bgee" id="379305">
    <property type="expression patterns" value="Expressed in blastula and 19 other cell types or tissues"/>
</dbReference>
<dbReference type="GO" id="GO:0005829">
    <property type="term" value="C:cytosol"/>
    <property type="evidence" value="ECO:0000318"/>
    <property type="project" value="GO_Central"/>
</dbReference>
<dbReference type="GO" id="GO:0005654">
    <property type="term" value="C:nucleoplasm"/>
    <property type="evidence" value="ECO:0000304"/>
    <property type="project" value="Reactome"/>
</dbReference>
<dbReference type="GO" id="GO:0000159">
    <property type="term" value="C:protein phosphatase type 2A complex"/>
    <property type="evidence" value="ECO:0000314"/>
    <property type="project" value="UniProtKB"/>
</dbReference>
<dbReference type="GO" id="GO:0140767">
    <property type="term" value="F:enzyme-substrate adaptor activity"/>
    <property type="evidence" value="ECO:0000250"/>
    <property type="project" value="UniProtKB"/>
</dbReference>
<dbReference type="GO" id="GO:0019888">
    <property type="term" value="F:protein phosphatase regulator activity"/>
    <property type="evidence" value="ECO:0000315"/>
    <property type="project" value="UniProtKB"/>
</dbReference>
<dbReference type="GO" id="GO:0051301">
    <property type="term" value="P:cell division"/>
    <property type="evidence" value="ECO:0007669"/>
    <property type="project" value="UniProtKB-KW"/>
</dbReference>
<dbReference type="GO" id="GO:0010458">
    <property type="term" value="P:exit from mitosis"/>
    <property type="evidence" value="ECO:0000315"/>
    <property type="project" value="UniProtKB"/>
</dbReference>
<dbReference type="GO" id="GO:0000278">
    <property type="term" value="P:mitotic cell cycle"/>
    <property type="evidence" value="ECO:0000315"/>
    <property type="project" value="UniProtKB"/>
</dbReference>
<dbReference type="GO" id="GO:0051983">
    <property type="term" value="P:regulation of chromosome segregation"/>
    <property type="evidence" value="ECO:0000250"/>
    <property type="project" value="UniProtKB"/>
</dbReference>
<dbReference type="FunFam" id="2.130.10.10:FF:000002">
    <property type="entry name" value="Serine/threonine-protein phosphatase 2A 55 kDa regulatory subunit B"/>
    <property type="match status" value="1"/>
</dbReference>
<dbReference type="Gene3D" id="2.130.10.10">
    <property type="entry name" value="YVTN repeat-like/Quinoprotein amine dehydrogenase"/>
    <property type="match status" value="1"/>
</dbReference>
<dbReference type="InterPro" id="IPR000009">
    <property type="entry name" value="PP2A_PR55"/>
</dbReference>
<dbReference type="InterPro" id="IPR018067">
    <property type="entry name" value="PP2A_PR55_CS"/>
</dbReference>
<dbReference type="InterPro" id="IPR015943">
    <property type="entry name" value="WD40/YVTN_repeat-like_dom_sf"/>
</dbReference>
<dbReference type="InterPro" id="IPR036322">
    <property type="entry name" value="WD40_repeat_dom_sf"/>
</dbReference>
<dbReference type="InterPro" id="IPR001680">
    <property type="entry name" value="WD40_rpt"/>
</dbReference>
<dbReference type="PANTHER" id="PTHR11871">
    <property type="entry name" value="PROTEIN PHOSPHATASE PP2A REGULATORY SUBUNIT B"/>
    <property type="match status" value="1"/>
</dbReference>
<dbReference type="PIRSF" id="PIRSF037309">
    <property type="entry name" value="PP2A_PR55"/>
    <property type="match status" value="1"/>
</dbReference>
<dbReference type="PRINTS" id="PR00600">
    <property type="entry name" value="PP2APR55"/>
</dbReference>
<dbReference type="SMART" id="SM00320">
    <property type="entry name" value="WD40"/>
    <property type="match status" value="7"/>
</dbReference>
<dbReference type="SUPFAM" id="SSF50978">
    <property type="entry name" value="WD40 repeat-like"/>
    <property type="match status" value="1"/>
</dbReference>
<dbReference type="PROSITE" id="PS01024">
    <property type="entry name" value="PR55_1"/>
    <property type="match status" value="1"/>
</dbReference>
<dbReference type="PROSITE" id="PS01025">
    <property type="entry name" value="PR55_2"/>
    <property type="match status" value="1"/>
</dbReference>
<evidence type="ECO:0000250" key="1">
    <source>
        <dbReference type="UniProtKB" id="P56932"/>
    </source>
</evidence>
<evidence type="ECO:0000269" key="2">
    <source>
    </source>
</evidence>
<evidence type="ECO:0000269" key="3">
    <source>
    </source>
</evidence>
<evidence type="ECO:0000269" key="4">
    <source>
    </source>
</evidence>
<evidence type="ECO:0000269" key="5">
    <source>
    </source>
</evidence>
<evidence type="ECO:0000305" key="6"/>
<evidence type="ECO:0000305" key="7">
    <source>
    </source>
</evidence>
<keyword id="KW-0131">Cell cycle</keyword>
<keyword id="KW-0132">Cell division</keyword>
<keyword id="KW-0963">Cytoplasm</keyword>
<keyword id="KW-0498">Mitosis</keyword>
<keyword id="KW-1185">Reference proteome</keyword>
<keyword id="KW-0677">Repeat</keyword>
<keyword id="KW-0853">WD repeat</keyword>
<protein>
    <recommendedName>
        <fullName>Serine/threonine-protein phosphatase 2A 55 kDa regulatory subunit B delta isoform</fullName>
    </recommendedName>
    <alternativeName>
        <fullName>PP2A subunit B isoform B55-delta</fullName>
    </alternativeName>
    <alternativeName>
        <fullName>PP2A subunit B isoform PR55-delta</fullName>
    </alternativeName>
    <alternativeName>
        <fullName>PP2A subunit B isoform R2-delta</fullName>
    </alternativeName>
    <alternativeName>
        <fullName>PP2A subunit B isoform delta</fullName>
    </alternativeName>
</protein>